<comment type="function">
    <text>This protein is one of the two subunits of integration host factor, a specific DNA-binding protein that functions in genetic recombination as well as in transcriptional and translational control.</text>
</comment>
<comment type="subunit">
    <text evidence="1">Heterodimer of an alpha and a beta chain.</text>
</comment>
<comment type="similarity">
    <text evidence="3">Belongs to the bacterial histone-like protein family.</text>
</comment>
<dbReference type="EMBL" id="M62644">
    <property type="protein sequence ID" value="AAA26558.1"/>
    <property type="molecule type" value="Genomic_DNA"/>
</dbReference>
<dbReference type="PIR" id="A38173">
    <property type="entry name" value="A38173"/>
</dbReference>
<dbReference type="SMR" id="P23302"/>
<dbReference type="STRING" id="273526.SMDB11_1423"/>
<dbReference type="GO" id="GO:0005829">
    <property type="term" value="C:cytosol"/>
    <property type="evidence" value="ECO:0007669"/>
    <property type="project" value="TreeGrafter"/>
</dbReference>
<dbReference type="GO" id="GO:0003677">
    <property type="term" value="F:DNA binding"/>
    <property type="evidence" value="ECO:0007669"/>
    <property type="project" value="UniProtKB-UniRule"/>
</dbReference>
<dbReference type="GO" id="GO:0030527">
    <property type="term" value="F:structural constituent of chromatin"/>
    <property type="evidence" value="ECO:0007669"/>
    <property type="project" value="InterPro"/>
</dbReference>
<dbReference type="GO" id="GO:0006310">
    <property type="term" value="P:DNA recombination"/>
    <property type="evidence" value="ECO:0007669"/>
    <property type="project" value="UniProtKB-UniRule"/>
</dbReference>
<dbReference type="GO" id="GO:0009893">
    <property type="term" value="P:positive regulation of metabolic process"/>
    <property type="evidence" value="ECO:0007669"/>
    <property type="project" value="UniProtKB-ARBA"/>
</dbReference>
<dbReference type="GO" id="GO:0006355">
    <property type="term" value="P:regulation of DNA-templated transcription"/>
    <property type="evidence" value="ECO:0007669"/>
    <property type="project" value="UniProtKB-UniRule"/>
</dbReference>
<dbReference type="GO" id="GO:0006417">
    <property type="term" value="P:regulation of translation"/>
    <property type="evidence" value="ECO:0007669"/>
    <property type="project" value="UniProtKB-UniRule"/>
</dbReference>
<dbReference type="CDD" id="cd13835">
    <property type="entry name" value="IHF_A"/>
    <property type="match status" value="1"/>
</dbReference>
<dbReference type="FunFam" id="4.10.520.10:FF:000002">
    <property type="entry name" value="Integration host factor subunit alpha"/>
    <property type="match status" value="1"/>
</dbReference>
<dbReference type="Gene3D" id="4.10.520.10">
    <property type="entry name" value="IHF-like DNA-binding proteins"/>
    <property type="match status" value="1"/>
</dbReference>
<dbReference type="HAMAP" id="MF_00380">
    <property type="entry name" value="IHF_alpha"/>
    <property type="match status" value="1"/>
</dbReference>
<dbReference type="InterPro" id="IPR000119">
    <property type="entry name" value="Hist_DNA-bd"/>
</dbReference>
<dbReference type="InterPro" id="IPR020816">
    <property type="entry name" value="Histone-like_DNA-bd_CS"/>
</dbReference>
<dbReference type="InterPro" id="IPR010992">
    <property type="entry name" value="IHF-like_DNA-bd_dom_sf"/>
</dbReference>
<dbReference type="InterPro" id="IPR005684">
    <property type="entry name" value="IHF_alpha"/>
</dbReference>
<dbReference type="NCBIfam" id="TIGR00987">
    <property type="entry name" value="himA"/>
    <property type="match status" value="1"/>
</dbReference>
<dbReference type="NCBIfam" id="NF001401">
    <property type="entry name" value="PRK00285.1"/>
    <property type="match status" value="1"/>
</dbReference>
<dbReference type="PANTHER" id="PTHR33175">
    <property type="entry name" value="DNA-BINDING PROTEIN HU"/>
    <property type="match status" value="1"/>
</dbReference>
<dbReference type="PANTHER" id="PTHR33175:SF2">
    <property type="entry name" value="INTEGRATION HOST FACTOR SUBUNIT ALPHA"/>
    <property type="match status" value="1"/>
</dbReference>
<dbReference type="Pfam" id="PF00216">
    <property type="entry name" value="Bac_DNA_binding"/>
    <property type="match status" value="1"/>
</dbReference>
<dbReference type="PRINTS" id="PR01727">
    <property type="entry name" value="DNABINDINGHU"/>
</dbReference>
<dbReference type="SMART" id="SM00411">
    <property type="entry name" value="BHL"/>
    <property type="match status" value="1"/>
</dbReference>
<dbReference type="SUPFAM" id="SSF47729">
    <property type="entry name" value="IHF-like DNA-binding proteins"/>
    <property type="match status" value="1"/>
</dbReference>
<dbReference type="PROSITE" id="PS00045">
    <property type="entry name" value="HISTONE_LIKE"/>
    <property type="match status" value="1"/>
</dbReference>
<feature type="chain" id="PRO_0000105027" description="Integration host factor subunit alpha">
    <location>
        <begin position="1"/>
        <end position="99"/>
    </location>
</feature>
<feature type="region of interest" description="Disordered" evidence="2">
    <location>
        <begin position="49"/>
        <end position="73"/>
    </location>
</feature>
<protein>
    <recommendedName>
        <fullName>Integration host factor subunit alpha</fullName>
        <shortName>IHF-alpha</shortName>
    </recommendedName>
</protein>
<keyword id="KW-0233">DNA recombination</keyword>
<keyword id="KW-0238">DNA-binding</keyword>
<keyword id="KW-0804">Transcription</keyword>
<keyword id="KW-0805">Transcription regulation</keyword>
<keyword id="KW-0810">Translation regulation</keyword>
<sequence length="99" mass="11256">MALTKAEMSEHLFEKLGLSKRDAKDLVELFFEEVRRALENGEQVKLSGFGNFDLRDKNQRPGRNPKTGEDIPITARRVVTFRPGQKLKSRVENASPKGE</sequence>
<accession>P23302</accession>
<gene>
    <name type="primary">ihfA</name>
    <name type="synonym">himA</name>
</gene>
<organism>
    <name type="scientific">Serratia marcescens</name>
    <dbReference type="NCBI Taxonomy" id="615"/>
    <lineage>
        <taxon>Bacteria</taxon>
        <taxon>Pseudomonadati</taxon>
        <taxon>Pseudomonadota</taxon>
        <taxon>Gammaproteobacteria</taxon>
        <taxon>Enterobacterales</taxon>
        <taxon>Yersiniaceae</taxon>
        <taxon>Serratia</taxon>
    </lineage>
</organism>
<reference key="1">
    <citation type="journal article" date="1991" name="J. Bacteriol.">
        <title>Genes coding for integration host factor are conserved in Gram-negative bacteria.</title>
        <authorList>
            <person name="Haluzi H."/>
            <person name="Goitein D."/>
            <person name="Koby S."/>
            <person name="Mendelson I."/>
            <person name="Teff D."/>
            <person name="Mengeritsky G."/>
            <person name="Giladi H."/>
            <person name="Oppenheim A.B."/>
        </authorList>
    </citation>
    <scope>NUCLEOTIDE SEQUENCE [GENOMIC DNA]</scope>
</reference>
<proteinExistence type="inferred from homology"/>
<evidence type="ECO:0000250" key="1"/>
<evidence type="ECO:0000256" key="2">
    <source>
        <dbReference type="SAM" id="MobiDB-lite"/>
    </source>
</evidence>
<evidence type="ECO:0000305" key="3"/>
<name>IHFA_SERMA</name>